<evidence type="ECO:0000250" key="1"/>
<evidence type="ECO:0000305" key="2"/>
<dbReference type="EMBL" id="DQ851108">
    <property type="protein sequence ID" value="ABG91423.1"/>
    <property type="molecule type" value="Genomic_DNA"/>
</dbReference>
<dbReference type="RefSeq" id="YP_778591.1">
    <property type="nucleotide sequence ID" value="NC_008408.1"/>
</dbReference>
<dbReference type="SMR" id="Q06J36"/>
<dbReference type="GeneID" id="4353008"/>
<dbReference type="GO" id="GO:0009507">
    <property type="term" value="C:chloroplast"/>
    <property type="evidence" value="ECO:0007669"/>
    <property type="project" value="UniProtKB-SubCell"/>
</dbReference>
<dbReference type="GO" id="GO:1990904">
    <property type="term" value="C:ribonucleoprotein complex"/>
    <property type="evidence" value="ECO:0007669"/>
    <property type="project" value="UniProtKB-KW"/>
</dbReference>
<dbReference type="GO" id="GO:0005840">
    <property type="term" value="C:ribosome"/>
    <property type="evidence" value="ECO:0007669"/>
    <property type="project" value="UniProtKB-KW"/>
</dbReference>
<dbReference type="GO" id="GO:0019843">
    <property type="term" value="F:rRNA binding"/>
    <property type="evidence" value="ECO:0007669"/>
    <property type="project" value="UniProtKB-UniRule"/>
</dbReference>
<dbReference type="GO" id="GO:0003735">
    <property type="term" value="F:structural constituent of ribosome"/>
    <property type="evidence" value="ECO:0007669"/>
    <property type="project" value="InterPro"/>
</dbReference>
<dbReference type="GO" id="GO:0006412">
    <property type="term" value="P:translation"/>
    <property type="evidence" value="ECO:0007669"/>
    <property type="project" value="UniProtKB-UniRule"/>
</dbReference>
<dbReference type="FunFam" id="3.30.1490.10:FF:000001">
    <property type="entry name" value="30S ribosomal protein S8"/>
    <property type="match status" value="1"/>
</dbReference>
<dbReference type="Gene3D" id="3.30.1370.30">
    <property type="match status" value="1"/>
</dbReference>
<dbReference type="Gene3D" id="3.30.1490.10">
    <property type="match status" value="1"/>
</dbReference>
<dbReference type="HAMAP" id="MF_01302_B">
    <property type="entry name" value="Ribosomal_uS8_B"/>
    <property type="match status" value="1"/>
</dbReference>
<dbReference type="InterPro" id="IPR000630">
    <property type="entry name" value="Ribosomal_uS8"/>
</dbReference>
<dbReference type="InterPro" id="IPR047863">
    <property type="entry name" value="Ribosomal_uS8_CS"/>
</dbReference>
<dbReference type="InterPro" id="IPR035987">
    <property type="entry name" value="Ribosomal_uS8_sf"/>
</dbReference>
<dbReference type="NCBIfam" id="NF001109">
    <property type="entry name" value="PRK00136.1"/>
    <property type="match status" value="1"/>
</dbReference>
<dbReference type="PANTHER" id="PTHR11758">
    <property type="entry name" value="40S RIBOSOMAL PROTEIN S15A"/>
    <property type="match status" value="1"/>
</dbReference>
<dbReference type="Pfam" id="PF00410">
    <property type="entry name" value="Ribosomal_S8"/>
    <property type="match status" value="1"/>
</dbReference>
<dbReference type="SUPFAM" id="SSF56047">
    <property type="entry name" value="Ribosomal protein S8"/>
    <property type="match status" value="1"/>
</dbReference>
<dbReference type="PROSITE" id="PS00053">
    <property type="entry name" value="RIBOSOMAL_S8"/>
    <property type="match status" value="1"/>
</dbReference>
<keyword id="KW-0150">Chloroplast</keyword>
<keyword id="KW-0934">Plastid</keyword>
<keyword id="KW-0687">Ribonucleoprotein</keyword>
<keyword id="KW-0689">Ribosomal protein</keyword>
<keyword id="KW-0694">RNA-binding</keyword>
<keyword id="KW-0699">rRNA-binding</keyword>
<gene>
    <name type="primary">rps8</name>
</gene>
<feature type="chain" id="PRO_0000290994" description="Small ribosomal subunit protein uS8c">
    <location>
        <begin position="1"/>
        <end position="134"/>
    </location>
</feature>
<protein>
    <recommendedName>
        <fullName evidence="2">Small ribosomal subunit protein uS8c</fullName>
    </recommendedName>
    <alternativeName>
        <fullName>30S ribosomal protein S8, chloroplastic</fullName>
    </alternativeName>
</protein>
<comment type="function">
    <text evidence="1">One of the primary rRNA binding proteins, it binds directly to 16S rRNA central domain where it helps coordinate assembly of the platform of the 30S subunit.</text>
</comment>
<comment type="subunit">
    <text evidence="1">Part of the 30S ribosomal subunit.</text>
</comment>
<comment type="subcellular location">
    <subcellularLocation>
        <location>Plastid</location>
        <location>Chloroplast</location>
    </subcellularLocation>
</comment>
<comment type="similarity">
    <text evidence="2">Belongs to the universal ribosomal protein uS8 family.</text>
</comment>
<reference key="1">
    <citation type="journal article" date="2007" name="Mol. Biol. Evol.">
        <title>The complete chloroplast genome of the chlorarachniophyte Bigelowiella natans: evidence for independent origins of chlorarachniophyte and euglenid secondary endosymbionts.</title>
        <authorList>
            <person name="Rogers M.B."/>
            <person name="Gilson P.R."/>
            <person name="Su V."/>
            <person name="McFadden G.I."/>
            <person name="Keeling P.J."/>
        </authorList>
    </citation>
    <scope>NUCLEOTIDE SEQUENCE [LARGE SCALE GENOMIC DNA]</scope>
</reference>
<accession>Q06J36</accession>
<geneLocation type="chloroplast"/>
<sequence length="134" mass="15430">MTDNLGKMLNKIKNAILVKHEAVLIPYTLNNFLILRILEQEGFLDSINIVCKKKKREYKYIKVYLKYNEQTSKSFIRNICRLSKPSLRVYTNSKKIPRILNGLGIIIVSTSKGVMTSKDAYSNNIGGELLFSIW</sequence>
<organism>
    <name type="scientific">Bigelowiella natans</name>
    <name type="common">Pedinomonas minutissima</name>
    <name type="synonym">Chlorarachnion sp. (strain CCMP621)</name>
    <dbReference type="NCBI Taxonomy" id="227086"/>
    <lineage>
        <taxon>Eukaryota</taxon>
        <taxon>Sar</taxon>
        <taxon>Rhizaria</taxon>
        <taxon>Cercozoa</taxon>
        <taxon>Chlorarachniophyceae</taxon>
        <taxon>Bigelowiella</taxon>
    </lineage>
</organism>
<proteinExistence type="inferred from homology"/>
<name>RR8_BIGNA</name>